<proteinExistence type="inferred from homology"/>
<gene>
    <name evidence="1" type="primary">rpsM</name>
    <name type="ordered locus">C8J_1494</name>
</gene>
<accession>A8FNQ4</accession>
<name>RS13_CAMJ8</name>
<feature type="chain" id="PRO_1000073208" description="Small ribosomal subunit protein uS13">
    <location>
        <begin position="1"/>
        <end position="121"/>
    </location>
</feature>
<feature type="region of interest" description="Disordered" evidence="2">
    <location>
        <begin position="95"/>
        <end position="121"/>
    </location>
</feature>
<keyword id="KW-0687">Ribonucleoprotein</keyword>
<keyword id="KW-0689">Ribosomal protein</keyword>
<keyword id="KW-0694">RNA-binding</keyword>
<keyword id="KW-0699">rRNA-binding</keyword>
<keyword id="KW-0820">tRNA-binding</keyword>
<reference key="1">
    <citation type="journal article" date="2007" name="J. Bacteriol.">
        <title>The complete genome sequence of Campylobacter jejuni strain 81116 (NCTC11828).</title>
        <authorList>
            <person name="Pearson B.M."/>
            <person name="Gaskin D.J.H."/>
            <person name="Segers R.P.A.M."/>
            <person name="Wells J.M."/>
            <person name="Nuijten P.J.M."/>
            <person name="van Vliet A.H.M."/>
        </authorList>
    </citation>
    <scope>NUCLEOTIDE SEQUENCE [LARGE SCALE GENOMIC DNA]</scope>
    <source>
        <strain>81116 / NCTC 11828</strain>
    </source>
</reference>
<protein>
    <recommendedName>
        <fullName evidence="1">Small ribosomal subunit protein uS13</fullName>
    </recommendedName>
    <alternativeName>
        <fullName evidence="3">30S ribosomal protein S13</fullName>
    </alternativeName>
</protein>
<organism>
    <name type="scientific">Campylobacter jejuni subsp. jejuni serotype O:6 (strain 81116 / NCTC 11828)</name>
    <dbReference type="NCBI Taxonomy" id="407148"/>
    <lineage>
        <taxon>Bacteria</taxon>
        <taxon>Pseudomonadati</taxon>
        <taxon>Campylobacterota</taxon>
        <taxon>Epsilonproteobacteria</taxon>
        <taxon>Campylobacterales</taxon>
        <taxon>Campylobacteraceae</taxon>
        <taxon>Campylobacter</taxon>
    </lineage>
</organism>
<comment type="function">
    <text evidence="1">Located at the top of the head of the 30S subunit, it contacts several helices of the 16S rRNA. In the 70S ribosome it contacts the 23S rRNA (bridge B1a) and protein L5 of the 50S subunit (bridge B1b), connecting the 2 subunits; these bridges are implicated in subunit movement. Contacts the tRNAs in the A and P-sites.</text>
</comment>
<comment type="subunit">
    <text evidence="1">Part of the 30S ribosomal subunit. Forms a loose heterodimer with protein S19. Forms two bridges to the 50S subunit in the 70S ribosome.</text>
</comment>
<comment type="similarity">
    <text evidence="1">Belongs to the universal ribosomal protein uS13 family.</text>
</comment>
<sequence length="121" mass="13735">MARIAGVDLPKKKRIEYGLTYIYGIGLFTSRKILDKVGISYDKRVHELSEDEAAAIRKEIQENYMVEGDLRKQVAMDIKALMDLGSFRGLRHRKGLPVRGQKTKTNARTRKGKRKTVGAKS</sequence>
<dbReference type="EMBL" id="CP000814">
    <property type="protein sequence ID" value="ABV53091.1"/>
    <property type="molecule type" value="Genomic_DNA"/>
</dbReference>
<dbReference type="RefSeq" id="WP_002800121.1">
    <property type="nucleotide sequence ID" value="NC_009839.1"/>
</dbReference>
<dbReference type="SMR" id="A8FNQ4"/>
<dbReference type="KEGG" id="cju:C8J_1494"/>
<dbReference type="HOGENOM" id="CLU_103849_1_2_7"/>
<dbReference type="GO" id="GO:0005829">
    <property type="term" value="C:cytosol"/>
    <property type="evidence" value="ECO:0007669"/>
    <property type="project" value="TreeGrafter"/>
</dbReference>
<dbReference type="GO" id="GO:0015935">
    <property type="term" value="C:small ribosomal subunit"/>
    <property type="evidence" value="ECO:0007669"/>
    <property type="project" value="TreeGrafter"/>
</dbReference>
<dbReference type="GO" id="GO:0019843">
    <property type="term" value="F:rRNA binding"/>
    <property type="evidence" value="ECO:0007669"/>
    <property type="project" value="UniProtKB-UniRule"/>
</dbReference>
<dbReference type="GO" id="GO:0003735">
    <property type="term" value="F:structural constituent of ribosome"/>
    <property type="evidence" value="ECO:0007669"/>
    <property type="project" value="InterPro"/>
</dbReference>
<dbReference type="GO" id="GO:0000049">
    <property type="term" value="F:tRNA binding"/>
    <property type="evidence" value="ECO:0007669"/>
    <property type="project" value="UniProtKB-UniRule"/>
</dbReference>
<dbReference type="GO" id="GO:0006412">
    <property type="term" value="P:translation"/>
    <property type="evidence" value="ECO:0007669"/>
    <property type="project" value="UniProtKB-UniRule"/>
</dbReference>
<dbReference type="FunFam" id="1.10.8.50:FF:000001">
    <property type="entry name" value="30S ribosomal protein S13"/>
    <property type="match status" value="1"/>
</dbReference>
<dbReference type="FunFam" id="4.10.910.10:FF:000001">
    <property type="entry name" value="30S ribosomal protein S13"/>
    <property type="match status" value="1"/>
</dbReference>
<dbReference type="Gene3D" id="1.10.8.50">
    <property type="match status" value="1"/>
</dbReference>
<dbReference type="Gene3D" id="4.10.910.10">
    <property type="entry name" value="30s ribosomal protein s13, domain 2"/>
    <property type="match status" value="1"/>
</dbReference>
<dbReference type="HAMAP" id="MF_01315">
    <property type="entry name" value="Ribosomal_uS13"/>
    <property type="match status" value="1"/>
</dbReference>
<dbReference type="InterPro" id="IPR027437">
    <property type="entry name" value="Rbsml_uS13_C"/>
</dbReference>
<dbReference type="InterPro" id="IPR001892">
    <property type="entry name" value="Ribosomal_uS13"/>
</dbReference>
<dbReference type="InterPro" id="IPR010979">
    <property type="entry name" value="Ribosomal_uS13-like_H2TH"/>
</dbReference>
<dbReference type="InterPro" id="IPR019980">
    <property type="entry name" value="Ribosomal_uS13_bac-type"/>
</dbReference>
<dbReference type="InterPro" id="IPR018269">
    <property type="entry name" value="Ribosomal_uS13_CS"/>
</dbReference>
<dbReference type="NCBIfam" id="TIGR03631">
    <property type="entry name" value="uS13_bact"/>
    <property type="match status" value="1"/>
</dbReference>
<dbReference type="PANTHER" id="PTHR10871">
    <property type="entry name" value="30S RIBOSOMAL PROTEIN S13/40S RIBOSOMAL PROTEIN S18"/>
    <property type="match status" value="1"/>
</dbReference>
<dbReference type="PANTHER" id="PTHR10871:SF1">
    <property type="entry name" value="SMALL RIBOSOMAL SUBUNIT PROTEIN US13M"/>
    <property type="match status" value="1"/>
</dbReference>
<dbReference type="Pfam" id="PF00416">
    <property type="entry name" value="Ribosomal_S13"/>
    <property type="match status" value="1"/>
</dbReference>
<dbReference type="PIRSF" id="PIRSF002134">
    <property type="entry name" value="Ribosomal_S13"/>
    <property type="match status" value="1"/>
</dbReference>
<dbReference type="SUPFAM" id="SSF46946">
    <property type="entry name" value="S13-like H2TH domain"/>
    <property type="match status" value="1"/>
</dbReference>
<dbReference type="PROSITE" id="PS00646">
    <property type="entry name" value="RIBOSOMAL_S13_1"/>
    <property type="match status" value="1"/>
</dbReference>
<dbReference type="PROSITE" id="PS50159">
    <property type="entry name" value="RIBOSOMAL_S13_2"/>
    <property type="match status" value="1"/>
</dbReference>
<evidence type="ECO:0000255" key="1">
    <source>
        <dbReference type="HAMAP-Rule" id="MF_01315"/>
    </source>
</evidence>
<evidence type="ECO:0000256" key="2">
    <source>
        <dbReference type="SAM" id="MobiDB-lite"/>
    </source>
</evidence>
<evidence type="ECO:0000305" key="3"/>